<proteinExistence type="evidence at protein level"/>
<organism>
    <name type="scientific">Staphylococcus aureus (strain N315)</name>
    <dbReference type="NCBI Taxonomy" id="158879"/>
    <lineage>
        <taxon>Bacteria</taxon>
        <taxon>Bacillati</taxon>
        <taxon>Bacillota</taxon>
        <taxon>Bacilli</taxon>
        <taxon>Bacillales</taxon>
        <taxon>Staphylococcaceae</taxon>
        <taxon>Staphylococcus</taxon>
    </lineage>
</organism>
<keyword id="KW-0012">Acyltransferase</keyword>
<keyword id="KW-0963">Cytoplasm</keyword>
<keyword id="KW-0275">Fatty acid biosynthesis</keyword>
<keyword id="KW-0276">Fatty acid metabolism</keyword>
<keyword id="KW-0444">Lipid biosynthesis</keyword>
<keyword id="KW-0443">Lipid metabolism</keyword>
<keyword id="KW-0511">Multifunctional enzyme</keyword>
<keyword id="KW-0808">Transferase</keyword>
<accession>P99159</accession>
<accession>Q99VA7</accession>
<gene>
    <name evidence="1" type="primary">fabH</name>
    <name type="ordered locus">SA0842</name>
</gene>
<name>FABH_STAAN</name>
<dbReference type="EC" id="2.3.1.180" evidence="1"/>
<dbReference type="EMBL" id="BA000018">
    <property type="protein sequence ID" value="BAB42083.1"/>
    <property type="molecule type" value="Genomic_DNA"/>
</dbReference>
<dbReference type="PIR" id="H89865">
    <property type="entry name" value="H89865"/>
</dbReference>
<dbReference type="RefSeq" id="WP_001100526.1">
    <property type="nucleotide sequence ID" value="NC_002745.2"/>
</dbReference>
<dbReference type="SMR" id="P99159"/>
<dbReference type="EnsemblBacteria" id="BAB42083">
    <property type="protein sequence ID" value="BAB42083"/>
    <property type="gene ID" value="BAB42083"/>
</dbReference>
<dbReference type="KEGG" id="sau:SA0842"/>
<dbReference type="HOGENOM" id="CLU_039592_3_1_9"/>
<dbReference type="UniPathway" id="UPA00094"/>
<dbReference type="GO" id="GO:0005737">
    <property type="term" value="C:cytoplasm"/>
    <property type="evidence" value="ECO:0007669"/>
    <property type="project" value="UniProtKB-SubCell"/>
</dbReference>
<dbReference type="GO" id="GO:0004315">
    <property type="term" value="F:3-oxoacyl-[acyl-carrier-protein] synthase activity"/>
    <property type="evidence" value="ECO:0007669"/>
    <property type="project" value="InterPro"/>
</dbReference>
<dbReference type="GO" id="GO:0033818">
    <property type="term" value="F:beta-ketoacyl-acyl-carrier-protein synthase III activity"/>
    <property type="evidence" value="ECO:0007669"/>
    <property type="project" value="UniProtKB-UniRule"/>
</dbReference>
<dbReference type="GO" id="GO:0006633">
    <property type="term" value="P:fatty acid biosynthetic process"/>
    <property type="evidence" value="ECO:0007669"/>
    <property type="project" value="UniProtKB-UniRule"/>
</dbReference>
<dbReference type="CDD" id="cd00830">
    <property type="entry name" value="KAS_III"/>
    <property type="match status" value="1"/>
</dbReference>
<dbReference type="FunFam" id="3.40.47.10:FF:000004">
    <property type="entry name" value="3-oxoacyl-[acyl-carrier-protein] synthase 3"/>
    <property type="match status" value="1"/>
</dbReference>
<dbReference type="Gene3D" id="3.40.47.10">
    <property type="match status" value="2"/>
</dbReference>
<dbReference type="HAMAP" id="MF_01815">
    <property type="entry name" value="FabH"/>
    <property type="match status" value="1"/>
</dbReference>
<dbReference type="InterPro" id="IPR013747">
    <property type="entry name" value="ACP_syn_III_C"/>
</dbReference>
<dbReference type="InterPro" id="IPR013751">
    <property type="entry name" value="ACP_syn_III_N"/>
</dbReference>
<dbReference type="InterPro" id="IPR004655">
    <property type="entry name" value="FabH"/>
</dbReference>
<dbReference type="InterPro" id="IPR016039">
    <property type="entry name" value="Thiolase-like"/>
</dbReference>
<dbReference type="NCBIfam" id="TIGR00747">
    <property type="entry name" value="fabH"/>
    <property type="match status" value="1"/>
</dbReference>
<dbReference type="NCBIfam" id="NF006829">
    <property type="entry name" value="PRK09352.1"/>
    <property type="match status" value="1"/>
</dbReference>
<dbReference type="PANTHER" id="PTHR43091">
    <property type="entry name" value="3-OXOACYL-[ACYL-CARRIER-PROTEIN] SYNTHASE"/>
    <property type="match status" value="1"/>
</dbReference>
<dbReference type="PANTHER" id="PTHR43091:SF1">
    <property type="entry name" value="BETA-KETOACYL-[ACYL-CARRIER-PROTEIN] SYNTHASE III, CHLOROPLASTIC"/>
    <property type="match status" value="1"/>
</dbReference>
<dbReference type="Pfam" id="PF08545">
    <property type="entry name" value="ACP_syn_III"/>
    <property type="match status" value="1"/>
</dbReference>
<dbReference type="Pfam" id="PF08541">
    <property type="entry name" value="ACP_syn_III_C"/>
    <property type="match status" value="1"/>
</dbReference>
<dbReference type="SUPFAM" id="SSF53901">
    <property type="entry name" value="Thiolase-like"/>
    <property type="match status" value="1"/>
</dbReference>
<comment type="function">
    <text evidence="2">Catalyzes the condensation reaction of fatty acid synthesis by the addition to an acyl acceptor of two carbons from malonyl-ACP. Catalyzes the first condensation reaction which initiates fatty acid synthesis and may therefore play a role in governing the total rate of fatty acid production. Possesses both acetoacetyl-ACP synthase and acetyl transacylase activities. Has some substrate preference for butyryl- and isobutyryl-CoA. Its substrate specificity determines the biosynthesis of branched-chain of fatty acids.</text>
</comment>
<comment type="catalytic activity">
    <reaction evidence="1">
        <text>malonyl-[ACP] + acetyl-CoA + H(+) = 3-oxobutanoyl-[ACP] + CO2 + CoA</text>
        <dbReference type="Rhea" id="RHEA:12080"/>
        <dbReference type="Rhea" id="RHEA-COMP:9623"/>
        <dbReference type="Rhea" id="RHEA-COMP:9625"/>
        <dbReference type="ChEBI" id="CHEBI:15378"/>
        <dbReference type="ChEBI" id="CHEBI:16526"/>
        <dbReference type="ChEBI" id="CHEBI:57287"/>
        <dbReference type="ChEBI" id="CHEBI:57288"/>
        <dbReference type="ChEBI" id="CHEBI:78449"/>
        <dbReference type="ChEBI" id="CHEBI:78450"/>
        <dbReference type="EC" id="2.3.1.180"/>
    </reaction>
</comment>
<comment type="pathway">
    <text evidence="1">Lipid metabolism; fatty acid biosynthesis.</text>
</comment>
<comment type="subunit">
    <text evidence="1">Homodimer.</text>
</comment>
<comment type="subcellular location">
    <subcellularLocation>
        <location evidence="1 3">Cytoplasm</location>
    </subcellularLocation>
</comment>
<comment type="domain">
    <text evidence="1">The last Arg residue of the ACP-binding site is essential for the weak association between ACP/AcpP and FabH.</text>
</comment>
<comment type="miscellaneous">
    <text>Inhibited by the HR12 (5-chloro-4-phenyl-[1,2]-dithiol-3-one) and HR19 (4-phenyl-5-phenylimino-[1,2,4]dithiazolidin-3-one) antibiotics. Weakly inhibited by thiolactomycin.</text>
</comment>
<comment type="similarity">
    <text evidence="1 3">Belongs to the thiolase-like superfamily. FabH family.</text>
</comment>
<feature type="chain" id="PRO_0000110470" description="Beta-ketoacyl-[acyl-carrier-protein] synthase III">
    <location>
        <begin position="1"/>
        <end position="313"/>
    </location>
</feature>
<feature type="region of interest" description="ACP-binding" evidence="1">
    <location>
        <begin position="239"/>
        <end position="243"/>
    </location>
</feature>
<feature type="active site" evidence="1">
    <location>
        <position position="112"/>
    </location>
</feature>
<feature type="active site" evidence="1">
    <location>
        <position position="238"/>
    </location>
</feature>
<feature type="active site" evidence="1">
    <location>
        <position position="268"/>
    </location>
</feature>
<protein>
    <recommendedName>
        <fullName evidence="1">Beta-ketoacyl-[acyl-carrier-protein] synthase III</fullName>
        <shortName evidence="1">Beta-ketoacyl-ACP synthase III</shortName>
        <shortName evidence="1">KAS III</shortName>
        <ecNumber evidence="1">2.3.1.180</ecNumber>
    </recommendedName>
    <alternativeName>
        <fullName evidence="1">3-oxoacyl-[acyl-carrier-protein] synthase 3</fullName>
    </alternativeName>
    <alternativeName>
        <fullName evidence="1">3-oxoacyl-[acyl-carrier-protein] synthase III</fullName>
    </alternativeName>
    <alternativeName>
        <fullName>SaFabH</fullName>
    </alternativeName>
</protein>
<reference key="1">
    <citation type="journal article" date="2001" name="Lancet">
        <title>Whole genome sequencing of meticillin-resistant Staphylococcus aureus.</title>
        <authorList>
            <person name="Kuroda M."/>
            <person name="Ohta T."/>
            <person name="Uchiyama I."/>
            <person name="Baba T."/>
            <person name="Yuzawa H."/>
            <person name="Kobayashi I."/>
            <person name="Cui L."/>
            <person name="Oguchi A."/>
            <person name="Aoki K."/>
            <person name="Nagai Y."/>
            <person name="Lian J.-Q."/>
            <person name="Ito T."/>
            <person name="Kanamori M."/>
            <person name="Matsumaru H."/>
            <person name="Maruyama A."/>
            <person name="Murakami H."/>
            <person name="Hosoyama A."/>
            <person name="Mizutani-Ui Y."/>
            <person name="Takahashi N.K."/>
            <person name="Sawano T."/>
            <person name="Inoue R."/>
            <person name="Kaito C."/>
            <person name="Sekimizu K."/>
            <person name="Hirakawa H."/>
            <person name="Kuhara S."/>
            <person name="Goto S."/>
            <person name="Yabuzaki J."/>
            <person name="Kanehisa M."/>
            <person name="Yamashita A."/>
            <person name="Oshima K."/>
            <person name="Furuya K."/>
            <person name="Yoshino C."/>
            <person name="Shiba T."/>
            <person name="Hattori M."/>
            <person name="Ogasawara N."/>
            <person name="Hayashi H."/>
            <person name="Hiramatsu K."/>
        </authorList>
    </citation>
    <scope>NUCLEOTIDE SEQUENCE [LARGE SCALE GENOMIC DNA]</scope>
    <source>
        <strain>N315</strain>
    </source>
</reference>
<reference key="2">
    <citation type="journal article" date="2002" name="Antimicrob. Agents Chemother.">
        <title>Purification, characterization, and identification of novel inhibitors of the beta-ketoacyl-acyl carrier protein synthase III (FabH) from Staphylococcus aureus.</title>
        <authorList>
            <person name="He X."/>
            <person name="Reynolds K.A."/>
        </authorList>
    </citation>
    <scope>FUNCTION</scope>
    <scope>HOMODIMERIZATION</scope>
    <scope>SUBSTRATE SPECIFICITY</scope>
</reference>
<reference key="3">
    <citation type="journal article" date="2005" name="J. Microbiol. Methods">
        <title>Correlation of proteomic and transcriptomic profiles of Staphylococcus aureus during the post-exponential phase of growth.</title>
        <authorList>
            <person name="Scherl A."/>
            <person name="Francois P."/>
            <person name="Bento M."/>
            <person name="Deshusses J.M."/>
            <person name="Charbonnier Y."/>
            <person name="Converset V."/>
            <person name="Huyghe A."/>
            <person name="Walter N."/>
            <person name="Hoogland C."/>
            <person name="Appel R.D."/>
            <person name="Sanchez J.-C."/>
            <person name="Zimmermann-Ivol C.G."/>
            <person name="Corthals G.L."/>
            <person name="Hochstrasser D.F."/>
            <person name="Schrenzel J."/>
        </authorList>
    </citation>
    <scope>IDENTIFICATION BY MASS SPECTROMETRY</scope>
    <source>
        <strain>N315</strain>
    </source>
</reference>
<reference key="4">
    <citation type="submission" date="2007-10" db="UniProtKB">
        <title>Shotgun proteomic analysis of total and membrane protein extracts of S. aureus strain N315.</title>
        <authorList>
            <person name="Vaezzadeh A.R."/>
            <person name="Deshusses J."/>
            <person name="Lescuyer P."/>
            <person name="Hochstrasser D.F."/>
        </authorList>
    </citation>
    <scope>IDENTIFICATION BY MASS SPECTROMETRY [LARGE SCALE ANALYSIS]</scope>
    <source>
        <strain>N315</strain>
    </source>
</reference>
<sequence>MNVGIKGFGAYAPEKIIDNAYFEQFLDTSDEWISKMTGIKERHWADDDQDTSDLAYEASVKAIADAGIQPEDIDMIIVATATGDMPFPTVANMLQERLGTGKVASMDQLAACSGFMYSMITAKQYVQSGDYHNILVVGADKLSKITDLTDRSTAVLFGDGAGAVIIGEVSEGRGIISYEMGSDGTGGKHLYLDKDTGKLKMNGREVFKFAVRIMGDASTRVVEKANLTSDDIDLFIPHQANIRIMESARERLGISKDKMSVSVNKYGNTSAASIPLSIDQELKNGKLKDDDTIVLVGFGGGLTWGAMTIKWGK</sequence>
<evidence type="ECO:0000255" key="1">
    <source>
        <dbReference type="HAMAP-Rule" id="MF_01815"/>
    </source>
</evidence>
<evidence type="ECO:0000269" key="2">
    <source>
    </source>
</evidence>
<evidence type="ECO:0000305" key="3"/>